<evidence type="ECO:0000250" key="1"/>
<evidence type="ECO:0000250" key="2">
    <source>
        <dbReference type="UniProtKB" id="Q6PHN9"/>
    </source>
</evidence>
<evidence type="ECO:0000269" key="3">
    <source>
    </source>
</evidence>
<evidence type="ECO:0000269" key="4">
    <source>
    </source>
</evidence>
<evidence type="ECO:0000269" key="5">
    <source>
    </source>
</evidence>
<evidence type="ECO:0000269" key="6">
    <source>
    </source>
</evidence>
<evidence type="ECO:0000269" key="7">
    <source>
    </source>
</evidence>
<evidence type="ECO:0000269" key="8">
    <source>
    </source>
</evidence>
<evidence type="ECO:0000269" key="9">
    <source>
    </source>
</evidence>
<evidence type="ECO:0000269" key="10">
    <source>
    </source>
</evidence>
<evidence type="ECO:0000269" key="11">
    <source>
    </source>
</evidence>
<evidence type="ECO:0000303" key="12">
    <source>
    </source>
</evidence>
<evidence type="ECO:0000305" key="13"/>
<evidence type="ECO:0000305" key="14">
    <source>
    </source>
</evidence>
<evidence type="ECO:0000305" key="15">
    <source>
    </source>
</evidence>
<evidence type="ECO:0000305" key="16">
    <source>
    </source>
</evidence>
<evidence type="ECO:0000312" key="17">
    <source>
        <dbReference type="HGNC" id="HGNC:9774"/>
    </source>
</evidence>
<evidence type="ECO:0007744" key="18">
    <source>
        <dbReference type="PDB" id="6IF2"/>
    </source>
</evidence>
<evidence type="ECO:0007744" key="19">
    <source>
        <dbReference type="PDB" id="6IF3"/>
    </source>
</evidence>
<evidence type="ECO:0007744" key="20">
    <source>
    </source>
</evidence>
<evidence type="ECO:0007829" key="21">
    <source>
        <dbReference type="PDB" id="6EKK"/>
    </source>
</evidence>
<evidence type="ECO:0007829" key="22">
    <source>
        <dbReference type="PDB" id="6IF3"/>
    </source>
</evidence>
<organism>
    <name type="scientific">Homo sapiens</name>
    <name type="common">Human</name>
    <dbReference type="NCBI Taxonomy" id="9606"/>
    <lineage>
        <taxon>Eukaryota</taxon>
        <taxon>Metazoa</taxon>
        <taxon>Chordata</taxon>
        <taxon>Craniata</taxon>
        <taxon>Vertebrata</taxon>
        <taxon>Euteleostomi</taxon>
        <taxon>Mammalia</taxon>
        <taxon>Eutheria</taxon>
        <taxon>Euarchontoglires</taxon>
        <taxon>Primates</taxon>
        <taxon>Haplorrhini</taxon>
        <taxon>Catarrhini</taxon>
        <taxon>Hominidae</taxon>
        <taxon>Homo</taxon>
    </lineage>
</organism>
<feature type="chain" id="PRO_0000121245" description="Ras-related protein Rab-35">
    <location>
        <begin position="1"/>
        <end position="201"/>
    </location>
</feature>
<feature type="short sequence motif" description="Switch 1" evidence="11 18 19">
    <location>
        <begin position="30"/>
        <end position="42"/>
    </location>
</feature>
<feature type="short sequence motif" description="Switch 2" evidence="11 18 19">
    <location>
        <begin position="64"/>
        <end position="80"/>
    </location>
</feature>
<feature type="binding site" evidence="11 18 19">
    <location>
        <position position="18"/>
    </location>
    <ligand>
        <name>GTP</name>
        <dbReference type="ChEBI" id="CHEBI:37565"/>
    </ligand>
</feature>
<feature type="binding site" evidence="11 18">
    <location>
        <position position="19"/>
    </location>
    <ligand>
        <name>GTP</name>
        <dbReference type="ChEBI" id="CHEBI:37565"/>
    </ligand>
</feature>
<feature type="binding site" evidence="11 18 19">
    <location>
        <position position="20"/>
    </location>
    <ligand>
        <name>GTP</name>
        <dbReference type="ChEBI" id="CHEBI:37565"/>
    </ligand>
</feature>
<feature type="binding site" evidence="11 18 19">
    <location>
        <position position="21"/>
    </location>
    <ligand>
        <name>GTP</name>
        <dbReference type="ChEBI" id="CHEBI:37565"/>
    </ligand>
</feature>
<feature type="binding site" evidence="11 18 19">
    <location>
        <position position="22"/>
    </location>
    <ligand>
        <name>GTP</name>
        <dbReference type="ChEBI" id="CHEBI:37565"/>
    </ligand>
</feature>
<feature type="binding site" evidence="11 18 19">
    <location>
        <position position="22"/>
    </location>
    <ligand>
        <name>Mg(2+)</name>
        <dbReference type="ChEBI" id="CHEBI:18420"/>
    </ligand>
</feature>
<feature type="binding site" evidence="11 18 19">
    <location>
        <position position="23"/>
    </location>
    <ligand>
        <name>GTP</name>
        <dbReference type="ChEBI" id="CHEBI:37565"/>
    </ligand>
</feature>
<feature type="binding site" evidence="11 18">
    <location>
        <position position="34"/>
    </location>
    <ligand>
        <name>GTP</name>
        <dbReference type="ChEBI" id="CHEBI:37565"/>
    </ligand>
</feature>
<feature type="binding site" evidence="11 18">
    <location>
        <position position="35"/>
    </location>
    <ligand>
        <name>GTP</name>
        <dbReference type="ChEBI" id="CHEBI:37565"/>
    </ligand>
</feature>
<feature type="binding site" evidence="11 18 19">
    <location>
        <position position="37"/>
    </location>
    <ligand>
        <name>GTP</name>
        <dbReference type="ChEBI" id="CHEBI:37565"/>
    </ligand>
</feature>
<feature type="binding site" evidence="11 18">
    <location>
        <position position="39"/>
    </location>
    <ligand>
        <name>GTP</name>
        <dbReference type="ChEBI" id="CHEBI:37565"/>
    </ligand>
</feature>
<feature type="binding site" evidence="11 18 19">
    <location>
        <position position="40"/>
    </location>
    <ligand>
        <name>GTP</name>
        <dbReference type="ChEBI" id="CHEBI:37565"/>
    </ligand>
</feature>
<feature type="binding site" evidence="11 18 19">
    <location>
        <position position="40"/>
    </location>
    <ligand>
        <name>Mg(2+)</name>
        <dbReference type="ChEBI" id="CHEBI:18420"/>
    </ligand>
</feature>
<feature type="binding site" evidence="11 18">
    <location>
        <position position="63"/>
    </location>
    <ligand>
        <name>Mg(2+)</name>
        <dbReference type="ChEBI" id="CHEBI:18420"/>
    </ligand>
</feature>
<feature type="binding site" evidence="11 18 19">
    <location>
        <position position="66"/>
    </location>
    <ligand>
        <name>GTP</name>
        <dbReference type="ChEBI" id="CHEBI:37565"/>
    </ligand>
</feature>
<feature type="binding site" evidence="11 18 19">
    <location>
        <position position="120"/>
    </location>
    <ligand>
        <name>GTP</name>
        <dbReference type="ChEBI" id="CHEBI:37565"/>
    </ligand>
</feature>
<feature type="binding site" evidence="11 18">
    <location>
        <position position="121"/>
    </location>
    <ligand>
        <name>GTP</name>
        <dbReference type="ChEBI" id="CHEBI:37565"/>
    </ligand>
</feature>
<feature type="binding site" evidence="11 18 19">
    <location>
        <position position="123"/>
    </location>
    <ligand>
        <name>GTP</name>
        <dbReference type="ChEBI" id="CHEBI:37565"/>
    </ligand>
</feature>
<feature type="binding site" evidence="11 18 19">
    <location>
        <position position="151"/>
    </location>
    <ligand>
        <name>GTP</name>
        <dbReference type="ChEBI" id="CHEBI:37565"/>
    </ligand>
</feature>
<feature type="binding site" evidence="11 18 19">
    <location>
        <position position="152"/>
    </location>
    <ligand>
        <name>GTP</name>
        <dbReference type="ChEBI" id="CHEBI:37565"/>
    </ligand>
</feature>
<feature type="modified residue" description="Phosphothreonine; by LRRK2" evidence="10 20">
    <location>
        <position position="72"/>
    </location>
</feature>
<feature type="modified residue" description="O-(2-cholinephosphoryl)serine" evidence="14 15">
    <location>
        <position position="75"/>
    </location>
</feature>
<feature type="modified residue" description="O-AMP-tyrosine" evidence="14">
    <location>
        <position position="77"/>
    </location>
</feature>
<feature type="lipid moiety-binding region" description="S-geranylgeranyl cysteine" evidence="1">
    <location>
        <position position="200"/>
    </location>
</feature>
<feature type="lipid moiety-binding region" description="S-geranylgeranyl cysteine" evidence="1">
    <location>
        <position position="201"/>
    </location>
</feature>
<feature type="splice variant" id="VSP_042918" description="In isoform 2." evidence="12">
    <original>VGNKNDDPERKVVETEDAYKFAGQMGIQLFETSAKENVNVEEMFNCITELVLRAKKDNLAKQQQQQQNDVVKLTKNSKRKKRCC</original>
    <variation>DVQLHHGAGPPSKERQPGKTAAATTERCGEAHEEQ</variation>
    <location>
        <begin position="118"/>
        <end position="201"/>
    </location>
</feature>
<feature type="mutagenesis site" description="Decreased interaction with RUSC2. No change in interaction with ACAP2, OCRL and MICAL1." evidence="11">
    <original>D</original>
    <variation>A</variation>
    <location>
        <position position="4"/>
    </location>
</feature>
<feature type="mutagenesis site" description="Decreased interaction with RUSC2." evidence="11">
    <original>Y</original>
    <variation>A</variation>
    <location>
        <position position="5"/>
    </location>
</feature>
<feature type="mutagenesis site" description="Loss of interaction with RUSC2." evidence="11">
    <original>K</original>
    <variation>A</variation>
    <location>
        <position position="10"/>
    </location>
</feature>
<feature type="mutagenesis site" description="Destabilization of the intercellular bridge during cytokinesis. Strong reduction in fast recycling." evidence="3">
    <original>S</original>
    <variation>N</variation>
    <location>
        <position position="22"/>
    </location>
</feature>
<feature type="mutagenesis site" description="Decreased interaction with ACAP2 and RUSC2." evidence="11">
    <original>F</original>
    <variation>A</variation>
    <location>
        <position position="45"/>
    </location>
</feature>
<feature type="mutagenesis site" description="Loss of interaction with RUSC2." evidence="11">
    <original>K</original>
    <variation>A</variation>
    <location>
        <position position="58"/>
    </location>
</feature>
<feature type="mutagenesis site" description="Decreased interaction with RUSC2." evidence="11">
    <original>Q</original>
    <variation>A</variation>
    <location>
        <position position="60"/>
    </location>
</feature>
<feature type="mutagenesis site" description="Loss of interaction with ACAP2 and RUSC2." evidence="11">
    <original>W</original>
    <variation>A</variation>
    <location>
        <position position="62"/>
    </location>
</feature>
<feature type="mutagenesis site" description="Loss of GTPase activity. Increased fast recycling." evidence="3">
    <original>Q</original>
    <variation>L</variation>
    <location>
        <position position="67"/>
    </location>
</feature>
<feature type="mutagenesis site" description="Loss of phosphorylation. No effect on binding to GDI1 and GDI2. Loss of interaction with ACAP2. No change in interaction with RUSC2, OCRL and MICAL1." evidence="10 11">
    <original>T</original>
    <variation>A</variation>
    <location>
        <position position="72"/>
    </location>
</feature>
<feature type="mutagenesis site" description="Loss of interaction with ACAP2. No change in interaction with RUSC2." evidence="11">
    <original>T</original>
    <variation>D</variation>
    <location>
        <position position="72"/>
    </location>
</feature>
<feature type="mutagenesis site" description="Phosphomimetic mutant. Loss of binding to GDI1, GDI2, CHM and CHML. Loss of interaction with ACAP2. No change in the interaction with RUSC2, OCRL and MICAL1." evidence="10">
    <original>T</original>
    <variation>E</variation>
    <location>
        <position position="72"/>
    </location>
</feature>
<feature type="mutagenesis site" description="Decreased interaction with ACAP2." evidence="11">
    <original>T</original>
    <variation>S</variation>
    <location>
        <position position="76"/>
    </location>
</feature>
<feature type="mutagenesis site" description="Loss of interaction with ACAP2 and RUSC2." evidence="11">
    <original>R</original>
    <variation>E</variation>
    <location>
        <position position="79"/>
    </location>
</feature>
<feature type="mutagenesis site" description="Decreased interaction with ACAP2 and RUSC2." evidence="11">
    <original>R</original>
    <variation>Q</variation>
    <location>
        <position position="79"/>
    </location>
</feature>
<feature type="mutagenesis site" description="Decreased interaction with ACAP2 and RUSC2." evidence="11">
    <original>R</original>
    <variation>W</variation>
    <location>
        <position position="79"/>
    </location>
</feature>
<feature type="strand" evidence="22">
    <location>
        <begin position="4"/>
        <end position="15"/>
    </location>
</feature>
<feature type="helix" evidence="22">
    <location>
        <begin position="21"/>
        <end position="30"/>
    </location>
</feature>
<feature type="helix" evidence="21">
    <location>
        <begin position="38"/>
        <end position="41"/>
    </location>
</feature>
<feature type="strand" evidence="22">
    <location>
        <begin position="42"/>
        <end position="52"/>
    </location>
</feature>
<feature type="strand" evidence="22">
    <location>
        <begin position="55"/>
        <end position="64"/>
    </location>
</feature>
<feature type="helix" evidence="22">
    <location>
        <begin position="68"/>
        <end position="70"/>
    </location>
</feature>
<feature type="helix" evidence="22">
    <location>
        <begin position="74"/>
        <end position="78"/>
    </location>
</feature>
<feature type="strand" evidence="22">
    <location>
        <begin position="82"/>
        <end position="89"/>
    </location>
</feature>
<feature type="helix" evidence="22">
    <location>
        <begin position="93"/>
        <end position="97"/>
    </location>
</feature>
<feature type="helix" evidence="22">
    <location>
        <begin position="99"/>
        <end position="109"/>
    </location>
</feature>
<feature type="strand" evidence="22">
    <location>
        <begin position="114"/>
        <end position="120"/>
    </location>
</feature>
<feature type="helix" evidence="22">
    <location>
        <begin position="125"/>
        <end position="127"/>
    </location>
</feature>
<feature type="helix" evidence="22">
    <location>
        <begin position="132"/>
        <end position="142"/>
    </location>
</feature>
<feature type="strand" evidence="22">
    <location>
        <begin position="145"/>
        <end position="148"/>
    </location>
</feature>
<feature type="turn" evidence="22">
    <location>
        <begin position="151"/>
        <end position="154"/>
    </location>
</feature>
<feature type="helix" evidence="22">
    <location>
        <begin position="157"/>
        <end position="173"/>
    </location>
</feature>
<proteinExistence type="evidence at protein level"/>
<gene>
    <name evidence="17" type="primary">RAB35</name>
    <name type="synonym">RAB1C</name>
    <name type="synonym">RAY</name>
</gene>
<reference key="1">
    <citation type="journal article" date="1994" name="Biochem. Biophys. Res. Commun.">
        <title>Molecular cloning of two small GTP-binding proteins from human skeletal muscle.</title>
        <authorList>
            <person name="Zhu A.X."/>
            <person name="Zhao Y."/>
            <person name="Flier J.S."/>
        </authorList>
    </citation>
    <scope>NUCLEOTIDE SEQUENCE [MRNA] (ISOFORM 1)</scope>
    <source>
        <tissue>Muscle</tissue>
    </source>
</reference>
<reference key="2">
    <citation type="submission" date="2002-04" db="EMBL/GenBank/DDBJ databases">
        <title>cDNA clones of human proteins involved in signal transduction sequenced by the Guthrie cDNA resource center (www.cdna.org).</title>
        <authorList>
            <person name="Puhl H.L. III"/>
            <person name="Ikeda S.R."/>
            <person name="Aronstam R.S."/>
        </authorList>
    </citation>
    <scope>NUCLEOTIDE SEQUENCE [LARGE SCALE MRNA] (ISOFORM 1)</scope>
    <source>
        <tissue>Brain</tissue>
    </source>
</reference>
<reference key="3">
    <citation type="submission" date="2004-10" db="EMBL/GenBank/DDBJ databases">
        <title>Cloning of human full-length CDSs in BD Creator(TM) system donor vector.</title>
        <authorList>
            <person name="Kalnine N."/>
            <person name="Chen X."/>
            <person name="Rolfs A."/>
            <person name="Halleck A."/>
            <person name="Hines L."/>
            <person name="Eisenstein S."/>
            <person name="Koundinya M."/>
            <person name="Raphael J."/>
            <person name="Moreira D."/>
            <person name="Kelley T."/>
            <person name="LaBaer J."/>
            <person name="Lin Y."/>
            <person name="Phelan M."/>
            <person name="Farmer A."/>
        </authorList>
    </citation>
    <scope>NUCLEOTIDE SEQUENCE [LARGE SCALE MRNA] (ISOFORM 1)</scope>
</reference>
<reference key="4">
    <citation type="submission" date="2004-06" db="EMBL/GenBank/DDBJ databases">
        <title>Cloning of human full open reading frames in Gateway(TM) system entry vector (pDONR201).</title>
        <authorList>
            <person name="Halleck A."/>
            <person name="Ebert L."/>
            <person name="Mkoundinya M."/>
            <person name="Schick M."/>
            <person name="Eisenstein S."/>
            <person name="Neubert P."/>
            <person name="Kstrang K."/>
            <person name="Schatten R."/>
            <person name="Shen B."/>
            <person name="Henze S."/>
            <person name="Mar W."/>
            <person name="Korn B."/>
            <person name="Zuo D."/>
            <person name="Hu Y."/>
            <person name="LaBaer J."/>
        </authorList>
    </citation>
    <scope>NUCLEOTIDE SEQUENCE [LARGE SCALE MRNA] (ISOFORM 1)</scope>
</reference>
<reference key="5">
    <citation type="journal article" date="2004" name="Nat. Genet.">
        <title>Complete sequencing and characterization of 21,243 full-length human cDNAs.</title>
        <authorList>
            <person name="Ota T."/>
            <person name="Suzuki Y."/>
            <person name="Nishikawa T."/>
            <person name="Otsuki T."/>
            <person name="Sugiyama T."/>
            <person name="Irie R."/>
            <person name="Wakamatsu A."/>
            <person name="Hayashi K."/>
            <person name="Sato H."/>
            <person name="Nagai K."/>
            <person name="Kimura K."/>
            <person name="Makita H."/>
            <person name="Sekine M."/>
            <person name="Obayashi M."/>
            <person name="Nishi T."/>
            <person name="Shibahara T."/>
            <person name="Tanaka T."/>
            <person name="Ishii S."/>
            <person name="Yamamoto J."/>
            <person name="Saito K."/>
            <person name="Kawai Y."/>
            <person name="Isono Y."/>
            <person name="Nakamura Y."/>
            <person name="Nagahari K."/>
            <person name="Murakami K."/>
            <person name="Yasuda T."/>
            <person name="Iwayanagi T."/>
            <person name="Wagatsuma M."/>
            <person name="Shiratori A."/>
            <person name="Sudo H."/>
            <person name="Hosoiri T."/>
            <person name="Kaku Y."/>
            <person name="Kodaira H."/>
            <person name="Kondo H."/>
            <person name="Sugawara M."/>
            <person name="Takahashi M."/>
            <person name="Kanda K."/>
            <person name="Yokoi T."/>
            <person name="Furuya T."/>
            <person name="Kikkawa E."/>
            <person name="Omura Y."/>
            <person name="Abe K."/>
            <person name="Kamihara K."/>
            <person name="Katsuta N."/>
            <person name="Sato K."/>
            <person name="Tanikawa M."/>
            <person name="Yamazaki M."/>
            <person name="Ninomiya K."/>
            <person name="Ishibashi T."/>
            <person name="Yamashita H."/>
            <person name="Murakawa K."/>
            <person name="Fujimori K."/>
            <person name="Tanai H."/>
            <person name="Kimata M."/>
            <person name="Watanabe M."/>
            <person name="Hiraoka S."/>
            <person name="Chiba Y."/>
            <person name="Ishida S."/>
            <person name="Ono Y."/>
            <person name="Takiguchi S."/>
            <person name="Watanabe S."/>
            <person name="Yosida M."/>
            <person name="Hotuta T."/>
            <person name="Kusano J."/>
            <person name="Kanehori K."/>
            <person name="Takahashi-Fujii A."/>
            <person name="Hara H."/>
            <person name="Tanase T.-O."/>
            <person name="Nomura Y."/>
            <person name="Togiya S."/>
            <person name="Komai F."/>
            <person name="Hara R."/>
            <person name="Takeuchi K."/>
            <person name="Arita M."/>
            <person name="Imose N."/>
            <person name="Musashino K."/>
            <person name="Yuuki H."/>
            <person name="Oshima A."/>
            <person name="Sasaki N."/>
            <person name="Aotsuka S."/>
            <person name="Yoshikawa Y."/>
            <person name="Matsunawa H."/>
            <person name="Ichihara T."/>
            <person name="Shiohata N."/>
            <person name="Sano S."/>
            <person name="Moriya S."/>
            <person name="Momiyama H."/>
            <person name="Satoh N."/>
            <person name="Takami S."/>
            <person name="Terashima Y."/>
            <person name="Suzuki O."/>
            <person name="Nakagawa S."/>
            <person name="Senoh A."/>
            <person name="Mizoguchi H."/>
            <person name="Goto Y."/>
            <person name="Shimizu F."/>
            <person name="Wakebe H."/>
            <person name="Hishigaki H."/>
            <person name="Watanabe T."/>
            <person name="Sugiyama A."/>
            <person name="Takemoto M."/>
            <person name="Kawakami B."/>
            <person name="Yamazaki M."/>
            <person name="Watanabe K."/>
            <person name="Kumagai A."/>
            <person name="Itakura S."/>
            <person name="Fukuzumi Y."/>
            <person name="Fujimori Y."/>
            <person name="Komiyama M."/>
            <person name="Tashiro H."/>
            <person name="Tanigami A."/>
            <person name="Fujiwara T."/>
            <person name="Ono T."/>
            <person name="Yamada K."/>
            <person name="Fujii Y."/>
            <person name="Ozaki K."/>
            <person name="Hirao M."/>
            <person name="Ohmori Y."/>
            <person name="Kawabata A."/>
            <person name="Hikiji T."/>
            <person name="Kobatake N."/>
            <person name="Inagaki H."/>
            <person name="Ikema Y."/>
            <person name="Okamoto S."/>
            <person name="Okitani R."/>
            <person name="Kawakami T."/>
            <person name="Noguchi S."/>
            <person name="Itoh T."/>
            <person name="Shigeta K."/>
            <person name="Senba T."/>
            <person name="Matsumura K."/>
            <person name="Nakajima Y."/>
            <person name="Mizuno T."/>
            <person name="Morinaga M."/>
            <person name="Sasaki M."/>
            <person name="Togashi T."/>
            <person name="Oyama M."/>
            <person name="Hata H."/>
            <person name="Watanabe M."/>
            <person name="Komatsu T."/>
            <person name="Mizushima-Sugano J."/>
            <person name="Satoh T."/>
            <person name="Shirai Y."/>
            <person name="Takahashi Y."/>
            <person name="Nakagawa K."/>
            <person name="Okumura K."/>
            <person name="Nagase T."/>
            <person name="Nomura N."/>
            <person name="Kikuchi H."/>
            <person name="Masuho Y."/>
            <person name="Yamashita R."/>
            <person name="Nakai K."/>
            <person name="Yada T."/>
            <person name="Nakamura Y."/>
            <person name="Ohara O."/>
            <person name="Isogai T."/>
            <person name="Sugano S."/>
        </authorList>
    </citation>
    <scope>NUCLEOTIDE SEQUENCE [LARGE SCALE MRNA] (ISOFORMS 1 AND 2)</scope>
    <source>
        <tissue>Tongue</tissue>
        <tissue>Uterus</tissue>
    </source>
</reference>
<reference key="6">
    <citation type="journal article" date="2006" name="Nature">
        <title>The finished DNA sequence of human chromosome 12.</title>
        <authorList>
            <person name="Scherer S.E."/>
            <person name="Muzny D.M."/>
            <person name="Buhay C.J."/>
            <person name="Chen R."/>
            <person name="Cree A."/>
            <person name="Ding Y."/>
            <person name="Dugan-Rocha S."/>
            <person name="Gill R."/>
            <person name="Gunaratne P."/>
            <person name="Harris R.A."/>
            <person name="Hawes A.C."/>
            <person name="Hernandez J."/>
            <person name="Hodgson A.V."/>
            <person name="Hume J."/>
            <person name="Jackson A."/>
            <person name="Khan Z.M."/>
            <person name="Kovar-Smith C."/>
            <person name="Lewis L.R."/>
            <person name="Lozado R.J."/>
            <person name="Metzker M.L."/>
            <person name="Milosavljevic A."/>
            <person name="Miner G.R."/>
            <person name="Montgomery K.T."/>
            <person name="Morgan M.B."/>
            <person name="Nazareth L.V."/>
            <person name="Scott G."/>
            <person name="Sodergren E."/>
            <person name="Song X.-Z."/>
            <person name="Steffen D."/>
            <person name="Lovering R.C."/>
            <person name="Wheeler D.A."/>
            <person name="Worley K.C."/>
            <person name="Yuan Y."/>
            <person name="Zhang Z."/>
            <person name="Adams C.Q."/>
            <person name="Ansari-Lari M.A."/>
            <person name="Ayele M."/>
            <person name="Brown M.J."/>
            <person name="Chen G."/>
            <person name="Chen Z."/>
            <person name="Clerc-Blankenburg K.P."/>
            <person name="Davis C."/>
            <person name="Delgado O."/>
            <person name="Dinh H.H."/>
            <person name="Draper H."/>
            <person name="Gonzalez-Garay M.L."/>
            <person name="Havlak P."/>
            <person name="Jackson L.R."/>
            <person name="Jacob L.S."/>
            <person name="Kelly S.H."/>
            <person name="Li L."/>
            <person name="Li Z."/>
            <person name="Liu J."/>
            <person name="Liu W."/>
            <person name="Lu J."/>
            <person name="Maheshwari M."/>
            <person name="Nguyen B.-V."/>
            <person name="Okwuonu G.O."/>
            <person name="Pasternak S."/>
            <person name="Perez L.M."/>
            <person name="Plopper F.J.H."/>
            <person name="Santibanez J."/>
            <person name="Shen H."/>
            <person name="Tabor P.E."/>
            <person name="Verduzco D."/>
            <person name="Waldron L."/>
            <person name="Wang Q."/>
            <person name="Williams G.A."/>
            <person name="Zhang J."/>
            <person name="Zhou J."/>
            <person name="Allen C.C."/>
            <person name="Amin A.G."/>
            <person name="Anyalebechi V."/>
            <person name="Bailey M."/>
            <person name="Barbaria J.A."/>
            <person name="Bimage K.E."/>
            <person name="Bryant N.P."/>
            <person name="Burch P.E."/>
            <person name="Burkett C.E."/>
            <person name="Burrell K.L."/>
            <person name="Calderon E."/>
            <person name="Cardenas V."/>
            <person name="Carter K."/>
            <person name="Casias K."/>
            <person name="Cavazos I."/>
            <person name="Cavazos S.R."/>
            <person name="Ceasar H."/>
            <person name="Chacko J."/>
            <person name="Chan S.N."/>
            <person name="Chavez D."/>
            <person name="Christopoulos C."/>
            <person name="Chu J."/>
            <person name="Cockrell R."/>
            <person name="Cox C.D."/>
            <person name="Dang M."/>
            <person name="Dathorne S.R."/>
            <person name="David R."/>
            <person name="Davis C.M."/>
            <person name="Davy-Carroll L."/>
            <person name="Deshazo D.R."/>
            <person name="Donlin J.E."/>
            <person name="D'Souza L."/>
            <person name="Eaves K.A."/>
            <person name="Egan A."/>
            <person name="Emery-Cohen A.J."/>
            <person name="Escotto M."/>
            <person name="Flagg N."/>
            <person name="Forbes L.D."/>
            <person name="Gabisi A.M."/>
            <person name="Garza M."/>
            <person name="Hamilton C."/>
            <person name="Henderson N."/>
            <person name="Hernandez O."/>
            <person name="Hines S."/>
            <person name="Hogues M.E."/>
            <person name="Huang M."/>
            <person name="Idlebird D.G."/>
            <person name="Johnson R."/>
            <person name="Jolivet A."/>
            <person name="Jones S."/>
            <person name="Kagan R."/>
            <person name="King L.M."/>
            <person name="Leal B."/>
            <person name="Lebow H."/>
            <person name="Lee S."/>
            <person name="LeVan J.M."/>
            <person name="Lewis L.C."/>
            <person name="London P."/>
            <person name="Lorensuhewa L.M."/>
            <person name="Loulseged H."/>
            <person name="Lovett D.A."/>
            <person name="Lucier A."/>
            <person name="Lucier R.L."/>
            <person name="Ma J."/>
            <person name="Madu R.C."/>
            <person name="Mapua P."/>
            <person name="Martindale A.D."/>
            <person name="Martinez E."/>
            <person name="Massey E."/>
            <person name="Mawhiney S."/>
            <person name="Meador M.G."/>
            <person name="Mendez S."/>
            <person name="Mercado C."/>
            <person name="Mercado I.C."/>
            <person name="Merritt C.E."/>
            <person name="Miner Z.L."/>
            <person name="Minja E."/>
            <person name="Mitchell T."/>
            <person name="Mohabbat F."/>
            <person name="Mohabbat K."/>
            <person name="Montgomery B."/>
            <person name="Moore N."/>
            <person name="Morris S."/>
            <person name="Munidasa M."/>
            <person name="Ngo R.N."/>
            <person name="Nguyen N.B."/>
            <person name="Nickerson E."/>
            <person name="Nwaokelemeh O.O."/>
            <person name="Nwokenkwo S."/>
            <person name="Obregon M."/>
            <person name="Oguh M."/>
            <person name="Oragunye N."/>
            <person name="Oviedo R.J."/>
            <person name="Parish B.J."/>
            <person name="Parker D.N."/>
            <person name="Parrish J."/>
            <person name="Parks K.L."/>
            <person name="Paul H.A."/>
            <person name="Payton B.A."/>
            <person name="Perez A."/>
            <person name="Perrin W."/>
            <person name="Pickens A."/>
            <person name="Primus E.L."/>
            <person name="Pu L.-L."/>
            <person name="Puazo M."/>
            <person name="Quiles M.M."/>
            <person name="Quiroz J.B."/>
            <person name="Rabata D."/>
            <person name="Reeves K."/>
            <person name="Ruiz S.J."/>
            <person name="Shao H."/>
            <person name="Sisson I."/>
            <person name="Sonaike T."/>
            <person name="Sorelle R.P."/>
            <person name="Sutton A.E."/>
            <person name="Svatek A.F."/>
            <person name="Svetz L.A."/>
            <person name="Tamerisa K.S."/>
            <person name="Taylor T.R."/>
            <person name="Teague B."/>
            <person name="Thomas N."/>
            <person name="Thorn R.D."/>
            <person name="Trejos Z.Y."/>
            <person name="Trevino B.K."/>
            <person name="Ukegbu O.N."/>
            <person name="Urban J.B."/>
            <person name="Vasquez L.I."/>
            <person name="Vera V.A."/>
            <person name="Villasana D.M."/>
            <person name="Wang L."/>
            <person name="Ward-Moore S."/>
            <person name="Warren J.T."/>
            <person name="Wei X."/>
            <person name="White F."/>
            <person name="Williamson A.L."/>
            <person name="Wleczyk R."/>
            <person name="Wooden H.S."/>
            <person name="Wooden S.H."/>
            <person name="Yen J."/>
            <person name="Yoon L."/>
            <person name="Yoon V."/>
            <person name="Zorrilla S.E."/>
            <person name="Nelson D."/>
            <person name="Kucherlapati R."/>
            <person name="Weinstock G."/>
            <person name="Gibbs R.A."/>
        </authorList>
    </citation>
    <scope>NUCLEOTIDE SEQUENCE [LARGE SCALE GENOMIC DNA]</scope>
</reference>
<reference key="7">
    <citation type="submission" date="2005-07" db="EMBL/GenBank/DDBJ databases">
        <authorList>
            <person name="Mural R.J."/>
            <person name="Istrail S."/>
            <person name="Sutton G.G."/>
            <person name="Florea L."/>
            <person name="Halpern A.L."/>
            <person name="Mobarry C.M."/>
            <person name="Lippert R."/>
            <person name="Walenz B."/>
            <person name="Shatkay H."/>
            <person name="Dew I."/>
            <person name="Miller J.R."/>
            <person name="Flanigan M.J."/>
            <person name="Edwards N.J."/>
            <person name="Bolanos R."/>
            <person name="Fasulo D."/>
            <person name="Halldorsson B.V."/>
            <person name="Hannenhalli S."/>
            <person name="Turner R."/>
            <person name="Yooseph S."/>
            <person name="Lu F."/>
            <person name="Nusskern D.R."/>
            <person name="Shue B.C."/>
            <person name="Zheng X.H."/>
            <person name="Zhong F."/>
            <person name="Delcher A.L."/>
            <person name="Huson D.H."/>
            <person name="Kravitz S.A."/>
            <person name="Mouchard L."/>
            <person name="Reinert K."/>
            <person name="Remington K.A."/>
            <person name="Clark A.G."/>
            <person name="Waterman M.S."/>
            <person name="Eichler E.E."/>
            <person name="Adams M.D."/>
            <person name="Hunkapiller M.W."/>
            <person name="Myers E.W."/>
            <person name="Venter J.C."/>
        </authorList>
    </citation>
    <scope>NUCLEOTIDE SEQUENCE [LARGE SCALE GENOMIC DNA]</scope>
</reference>
<reference key="8">
    <citation type="journal article" date="2004" name="Genome Res.">
        <title>The status, quality, and expansion of the NIH full-length cDNA project: the Mammalian Gene Collection (MGC).</title>
        <authorList>
            <consortium name="The MGC Project Team"/>
        </authorList>
    </citation>
    <scope>NUCLEOTIDE SEQUENCE [LARGE SCALE MRNA] (ISOFORM 1)</scope>
    <source>
        <tissue>Uterus</tissue>
    </source>
</reference>
<reference key="9">
    <citation type="journal article" date="2006" name="Curr. Biol.">
        <title>Rab35 regulates an endocytic recycling pathway essential for the terminal steps of cytokinesis.</title>
        <authorList>
            <person name="Kouranti I."/>
            <person name="Sachse M."/>
            <person name="Arouche N."/>
            <person name="Goud B."/>
            <person name="Echard A."/>
        </authorList>
    </citation>
    <scope>FUNCTION</scope>
    <scope>SUBCELLULAR LOCATION</scope>
    <scope>MUTAGENESIS OF SER-22 AND GLN-67</scope>
</reference>
<reference key="10">
    <citation type="journal article" date="2006" name="J. Proteome Res.">
        <title>Proteomic and bioinformatic characterization of the biogenesis and function of melanosomes.</title>
        <authorList>
            <person name="Chi A."/>
            <person name="Valencia J.C."/>
            <person name="Hu Z.-Z."/>
            <person name="Watabe H."/>
            <person name="Yamaguchi H."/>
            <person name="Mangini N.J."/>
            <person name="Huang H."/>
            <person name="Canfield V.A."/>
            <person name="Cheng K.C."/>
            <person name="Yang F."/>
            <person name="Abe R."/>
            <person name="Yamagishi S."/>
            <person name="Shabanowitz J."/>
            <person name="Hearing V.J."/>
            <person name="Wu C."/>
            <person name="Appella E."/>
            <person name="Hunt D.F."/>
        </authorList>
    </citation>
    <scope>SUBCELLULAR LOCATION [LARGE SCALE ANALYSIS]</scope>
    <source>
        <tissue>Melanoma</tissue>
    </source>
</reference>
<reference key="11">
    <citation type="journal article" date="2010" name="J. Biol. Chem.">
        <title>The connecdenn family, Rab35 guanine nucleotide exchange factors interfacing with the clathrin machinery.</title>
        <authorList>
            <person name="Marat A.L."/>
            <person name="McPherson P.S."/>
        </authorList>
    </citation>
    <scope>ACTIVITY REGULATION</scope>
    <scope>INTERACTION WITH DENND1A; DENND1B AND DENND1C</scope>
</reference>
<reference key="12">
    <citation type="journal article" date="2011" name="BMC Syst. Biol.">
        <title>Initial characterization of the human central proteome.</title>
        <authorList>
            <person name="Burkard T.R."/>
            <person name="Planyavsky M."/>
            <person name="Kaupe I."/>
            <person name="Breitwieser F.P."/>
            <person name="Buerckstuemmer T."/>
            <person name="Bennett K.L."/>
            <person name="Superti-Furga G."/>
            <person name="Colinge J."/>
        </authorList>
    </citation>
    <scope>IDENTIFICATION BY MASS SPECTROMETRY [LARGE SCALE ANALYSIS]</scope>
</reference>
<reference key="13">
    <citation type="journal article" date="2011" name="Nature">
        <title>Modulation of Rab GTPase function by a protein phosphocholine transferase.</title>
        <authorList>
            <person name="Mukherjee S."/>
            <person name="Liu X."/>
            <person name="Arasaki K."/>
            <person name="McDonough J."/>
            <person name="Galan J.E."/>
            <person name="Roy C.R."/>
        </authorList>
    </citation>
    <scope>INTERACTION WITH L.PNEUMOPHILA ANKX AND DRRA</scope>
    <scope>AMPYLATION AT TYR-77</scope>
    <scope>PHOSPHORYLATION AT SER-75</scope>
</reference>
<reference key="14">
    <citation type="journal article" date="2012" name="EMBO J.">
        <title>Reversible phosphocholination of Rab proteins by Legionella pneumophila effector proteins.</title>
        <authorList>
            <person name="Goody P.R."/>
            <person name="Heller K."/>
            <person name="Oesterlin L.K."/>
            <person name="Muller M.P."/>
            <person name="Itzen A."/>
            <person name="Goody R.S."/>
        </authorList>
    </citation>
    <scope>INTERACTION WITH L.PNEUMOPHILA ANKX AND DRRA</scope>
    <scope>AMPYLATION</scope>
    <scope>PHOSPHORYLATION AT SER-75</scope>
</reference>
<reference key="15">
    <citation type="journal article" date="2012" name="Traffic">
        <title>MICAL-L1 is a tubular endosomal membrane hub that connects Rab35 and Arf6 with Rab8a.</title>
        <authorList>
            <person name="Rahajeng J."/>
            <person name="Giridharan S.S."/>
            <person name="Cai B."/>
            <person name="Naslavsky N."/>
            <person name="Caplan S."/>
        </authorList>
    </citation>
    <scope>FUNCTION IN ENDOCYTOSIS</scope>
    <scope>SUBCELLULAR LOCATION</scope>
    <scope>INTERACTION WITH MICALL1</scope>
</reference>
<reference key="16">
    <citation type="journal article" date="2013" name="J. Proteome Res.">
        <title>Toward a comprehensive characterization of a human cancer cell phosphoproteome.</title>
        <authorList>
            <person name="Zhou H."/>
            <person name="Di Palma S."/>
            <person name="Preisinger C."/>
            <person name="Peng M."/>
            <person name="Polat A.N."/>
            <person name="Heck A.J."/>
            <person name="Mohammed S."/>
        </authorList>
    </citation>
    <scope>PHOSPHORYLATION [LARGE SCALE ANALYSIS] AT THR-72</scope>
    <scope>IDENTIFICATION BY MASS SPECTROMETRY [LARGE SCALE ANALYSIS]</scope>
    <source>
        <tissue>Erythroleukemia</tissue>
    </source>
</reference>
<reference key="17">
    <citation type="journal article" date="2015" name="Proteomics">
        <title>N-terminome analysis of the human mitochondrial proteome.</title>
        <authorList>
            <person name="Vaca Jacome A.S."/>
            <person name="Rabilloud T."/>
            <person name="Schaeffer-Reiss C."/>
            <person name="Rompais M."/>
            <person name="Ayoub D."/>
            <person name="Lane L."/>
            <person name="Bairoch A."/>
            <person name="Van Dorsselaer A."/>
            <person name="Carapito C."/>
        </authorList>
    </citation>
    <scope>IDENTIFICATION BY MASS SPECTROMETRY [LARGE SCALE ANALYSIS]</scope>
</reference>
<reference key="18">
    <citation type="journal article" date="2017" name="Elife">
        <title>Systematic proteomic analysis of LRRK2-mediated Rab GTPase phosphorylation establishes a connection to ciliogenesis.</title>
        <authorList>
            <person name="Steger M."/>
            <person name="Diez F."/>
            <person name="Dhekne H.S."/>
            <person name="Lis P."/>
            <person name="Nirujogi R.S."/>
            <person name="Karayel O."/>
            <person name="Tonelli F."/>
            <person name="Martinez T.N."/>
            <person name="Lorentzen E."/>
            <person name="Pfeffer S.R."/>
            <person name="Alessi D.R."/>
            <person name="Mann M."/>
        </authorList>
    </citation>
    <scope>INTERACTION WITH GDI1; GDI2; CHM AND CHML</scope>
    <scope>PHOSPHORYLATION AT THR-72</scope>
    <scope>MUTAGENESIS OF THR-72</scope>
</reference>
<reference key="19">
    <citation type="journal article" date="2011" name="Proc. Natl. Acad. Sci. U.S.A.">
        <title>Insights regarding guanine nucleotide exchange from the structure of a DENN-domain protein complexed with its Rab GTPase substrate.</title>
        <authorList>
            <person name="Wu X."/>
            <person name="Bradley M.J."/>
            <person name="Cai Y."/>
            <person name="Kummel D."/>
            <person name="De La Cruz E.M."/>
            <person name="Barr F.A."/>
            <person name="Reinisch K.M."/>
        </authorList>
    </citation>
    <scope>X-RAY CRYSTALLOGRAPHY (2.1 ANGSTROMS) OF 1-180 IN COMPLEX WITH DENND1B</scope>
    <scope>INTERACTION WITH DENND1B</scope>
</reference>
<reference evidence="18 19" key="20">
    <citation type="journal article" date="2019" name="Structure">
        <title>Rab35/ACAP2 and Rab35/RUSC2 Complex Structures Reveal Molecular Basis for Effector Recognition by Rab35 GTPase.</title>
        <authorList>
            <person name="Lin L."/>
            <person name="Shi Y."/>
            <person name="Wang M."/>
            <person name="Wang C."/>
            <person name="Zhu J."/>
            <person name="Zhang R."/>
        </authorList>
    </citation>
    <scope>X-RAY CRYSTALLOGRAPHY (1.50 ANGSTROMS) OF 1-180 IN COMPLEX WITH GTP AND MG(2+)</scope>
    <scope>FUNCTION</scope>
    <scope>CATALYTIC ACTIVITY</scope>
    <scope>COFACTOR</scope>
    <scope>INTERACTION WITH ACAP2; RUSC2; OCRL AND MICAL1</scope>
    <scope>ACTIVITY REGULATION</scope>
    <scope>MUTAGENESIS OF ASP-4; TYR-5; LYS-10; PHE-45; LYS-58; GLN-60; TRP-62; THR-72; THR-76 AND ARG-79</scope>
    <scope>SUBCELLULAR LOCATION</scope>
    <scope>DOMAIN</scope>
</reference>
<keyword id="KW-0002">3D-structure</keyword>
<keyword id="KW-0025">Alternative splicing</keyword>
<keyword id="KW-1003">Cell membrane</keyword>
<keyword id="KW-0168">Coated pit</keyword>
<keyword id="KW-0968">Cytoplasmic vesicle</keyword>
<keyword id="KW-0967">Endosome</keyword>
<keyword id="KW-0342">GTP-binding</keyword>
<keyword id="KW-0378">Hydrolase</keyword>
<keyword id="KW-0449">Lipoprotein</keyword>
<keyword id="KW-0460">Magnesium</keyword>
<keyword id="KW-0472">Membrane</keyword>
<keyword id="KW-0479">Metal-binding</keyword>
<keyword id="KW-0547">Nucleotide-binding</keyword>
<keyword id="KW-0597">Phosphoprotein</keyword>
<keyword id="KW-0636">Prenylation</keyword>
<keyword id="KW-0653">Protein transport</keyword>
<keyword id="KW-1267">Proteomics identification</keyword>
<keyword id="KW-1185">Reference proteome</keyword>
<keyword id="KW-0813">Transport</keyword>
<comment type="function">
    <text evidence="2 3 7 11">The small GTPases Rab are key regulators of intracellular membrane trafficking, from the formation of transport vesicles to their fusion with membranes. Rabs cycle between an inactive GDP-bound form and an active GTP-bound form that is able to recruit to membranes different sets of downstream effectors directly responsible for vesicle formation, movement, tethering and fusion (PubMed:30905672). RAB35 is involved in the process of endocytosis and is an essential rate-limiting regulator of the fast recycling pathway back to the plasma membrane (PubMed:21951725). During cytokinesis, required for the postfurrowing terminal steps, namely for intercellular bridge stability and abscission, possibly by controlling phosphatidylinositol 4,5-bis phosphate (PIP2) and SEPT2 localization at the intercellular bridge (PubMed:16950109). May indirectly regulate neurite outgrowth. Together with TBC1D13 may be involved in regulation of insulin-induced glucose transporter SLC2A4/GLUT4 translocation to the plasma membrane in adipocytes (By similarity).</text>
</comment>
<comment type="catalytic activity">
    <reaction evidence="11">
        <text>GTP + H2O = GDP + phosphate + H(+)</text>
        <dbReference type="Rhea" id="RHEA:19669"/>
        <dbReference type="ChEBI" id="CHEBI:15377"/>
        <dbReference type="ChEBI" id="CHEBI:15378"/>
        <dbReference type="ChEBI" id="CHEBI:37565"/>
        <dbReference type="ChEBI" id="CHEBI:43474"/>
        <dbReference type="ChEBI" id="CHEBI:58189"/>
        <dbReference type="EC" id="3.6.5.2"/>
    </reaction>
    <physiologicalReaction direction="left-to-right" evidence="16">
        <dbReference type="Rhea" id="RHEA:19670"/>
    </physiologicalReaction>
</comment>
<comment type="cofactor">
    <cofactor evidence="11">
        <name>Mg(2+)</name>
        <dbReference type="ChEBI" id="CHEBI:18420"/>
    </cofactor>
</comment>
<comment type="activity regulation">
    <text evidence="5 11 13">Regulated by guanine nucleotide exchange factors (GEFs) including DENND1A, DENND1B and DENND1C which promote the exchange of bound GDP for free GTP (PubMed:20154091). Regulated by GTPase activating proteins (GAPs) including TBC1D10 and TBC1D13 which increase GTP hydrolysis activity (PubMed:30905672). Inhibited by GDP dissociation inhibitors (GDIs) which prevent Rab-GDP dissociation (Probable).</text>
</comment>
<comment type="subunit">
    <text evidence="2 5 7 8 10 11">Interacts with DENND1A and DENND1B; in a nucleotide-dependent manner (PubMed:20154091, PubMed:22065758). Interacts with DENND1C; weak interaction which is nucleotide-independent (PubMed:20154091). Interacts (GTP-bound form) with ACAP2, RUSC2, OCRL MICAL1 and MICALL1; the interaction is direct and probably recruits these effectors to membranes (PubMed:21951725, PubMed:30905672). Interacts with EHD1; the interaction is indirect through MICALL1 and probably recruits EHD1 to membranes (By similarity). Interacts with GDI1, GDI2, CHM and CHML; phosphorylation at Thr-72 by LRRK2 disrupts these interactions (PubMed:29125462).</text>
</comment>
<comment type="interaction">
    <interactant intactId="EBI-722275">
        <id>Q15286</id>
    </interactant>
    <interactant intactId="EBI-10968534">
        <id>P50570-2</id>
        <label>DNM2</label>
    </interactant>
    <organismsDiffer>false</organismsDiffer>
    <experiments>3</experiments>
</comment>
<comment type="interaction">
    <interactant intactId="EBI-722275">
        <id>Q15286</id>
    </interactant>
    <interactant intactId="EBI-466029">
        <id>P42858</id>
        <label>HTT</label>
    </interactant>
    <organismsDiffer>false</organismsDiffer>
    <experiments>3</experiments>
</comment>
<comment type="interaction">
    <interactant intactId="EBI-722275">
        <id>Q15286</id>
    </interactant>
    <interactant intactId="EBI-1055254">
        <id>Q8WXH2</id>
        <label>JPH3</label>
    </interactant>
    <organismsDiffer>false</organismsDiffer>
    <experiments>3</experiments>
</comment>
<comment type="interaction">
    <interactant intactId="EBI-722275">
        <id>Q15286</id>
    </interactant>
    <interactant intactId="EBI-1056885">
        <id>Q8N3F8</id>
        <label>MICALL1</label>
    </interactant>
    <organismsDiffer>false</organismsDiffer>
    <experiments>2</experiments>
</comment>
<comment type="subcellular location">
    <subcellularLocation>
        <location evidence="3 7 11">Cell membrane</location>
        <topology evidence="13">Lipid-anchor</topology>
        <orientation evidence="13">Cytoplasmic side</orientation>
    </subcellularLocation>
    <subcellularLocation>
        <location evidence="3">Membrane</location>
        <location evidence="3">Clathrin-coated pit</location>
    </subcellularLocation>
    <subcellularLocation>
        <location evidence="3">Cytoplasmic vesicle</location>
        <location evidence="3">Clathrin-coated vesicle</location>
    </subcellularLocation>
    <subcellularLocation>
        <location evidence="3 7">Endosome</location>
    </subcellularLocation>
    <subcellularLocation>
        <location evidence="4">Melanosome</location>
    </subcellularLocation>
    <text evidence="3 4 11">Present on sorting endosomes and recycling endosome tubules (PubMed:16950109). Tends to be enriched in PIP2-positive cell membrane domains (PubMed:16950109). During mitosis, associated with the plasma membrane and present at the ingressing furrow during early cytokinesis as well as at the intercellular bridge later during cytokinesis (PubMed:16950109). Identified in stage I to stage IV melanosomes (PubMed:17081065). Colocalizes with ACAP2 and RUSC2 at the membrane protrusions of HEK293T cells (PubMed:30905672).</text>
</comment>
<comment type="alternative products">
    <event type="alternative splicing"/>
    <isoform>
        <id>Q15286-1</id>
        <name>1</name>
        <sequence type="displayed"/>
    </isoform>
    <isoform>
        <id>Q15286-2</id>
        <name>2</name>
        <sequence type="described" ref="VSP_042918"/>
    </isoform>
</comment>
<comment type="domain">
    <text evidence="11">Switch 1, switch 2 and the interswitch regions are characteristic of Rab GTPases and mediate the interactions with Rab downstream effectors. The switch regions undergo conformational changes upon nucleotide binding which drives interaction with specific sets of effector proteins, with most effectors only binding to GTP-bound Rab.</text>
</comment>
<comment type="PTM">
    <text evidence="10">Phosphorylation at Thr-72 by LRRK2 prevents the association of regulatory proteins including CHM, CHML and GDP dissociation inhibitors GDI1 and GDI2.</text>
</comment>
<comment type="PTM">
    <text evidence="6 9">AMPylation at Tyr-77 by L.pneumophila DrrA occurs in the switch 2 region and leads to moderate inactivation of the GTPase activity. It appears to prolong the lifetime of the GTP state of RAB1B by restricting access of GTPase effectors to switch 2 and blocking effector-stimulated GTP hydrolysis, thereby rendering RAB35 constitutively active.</text>
</comment>
<comment type="PTM">
    <text>Phosphocholinated by L.pneumophila AnkX. Both GDP-bound and GTP-bound forms can be phosphocholinated. Phosphocholination inhibits the GEF activity of DENND1A.</text>
</comment>
<comment type="similarity">
    <text evidence="13">Belongs to the small GTPase superfamily. Rab family.</text>
</comment>
<name>RAB35_HUMAN</name>
<sequence length="201" mass="23025">MARDYDHLFKLLIIGDSGVGKSSLLLRFADNTFSGSYITTIGVDFKIRTVEINGEKVKLQIWDTAGQERFRTITSTYYRGTHGVIVVYDVTSAESFVNVKRWLHEINQNCDDVCRILVGNKNDDPERKVVETEDAYKFAGQMGIQLFETSAKENVNVEEMFNCITELVLRAKKDNLAKQQQQQQNDVVKLTKNSKRKKRCC</sequence>
<protein>
    <recommendedName>
        <fullName>Ras-related protein Rab-35</fullName>
        <ecNumber evidence="11">3.6.5.2</ecNumber>
    </recommendedName>
    <alternativeName>
        <fullName>GTP-binding protein RAY</fullName>
    </alternativeName>
    <alternativeName>
        <fullName>Ras-related protein Rab-1C</fullName>
    </alternativeName>
</protein>
<dbReference type="EC" id="3.6.5.2" evidence="11"/>
<dbReference type="EMBL" id="X79781">
    <property type="protein sequence ID" value="CAA56177.1"/>
    <property type="molecule type" value="mRNA"/>
</dbReference>
<dbReference type="EMBL" id="AF498960">
    <property type="protein sequence ID" value="AAM21108.1"/>
    <property type="molecule type" value="mRNA"/>
</dbReference>
<dbReference type="EMBL" id="BT020024">
    <property type="protein sequence ID" value="AAV38827.1"/>
    <property type="molecule type" value="mRNA"/>
</dbReference>
<dbReference type="EMBL" id="CR536486">
    <property type="protein sequence ID" value="CAG38725.1"/>
    <property type="molecule type" value="mRNA"/>
</dbReference>
<dbReference type="EMBL" id="CR541683">
    <property type="protein sequence ID" value="CAG46484.1"/>
    <property type="molecule type" value="mRNA"/>
</dbReference>
<dbReference type="EMBL" id="AK304620">
    <property type="protein sequence ID" value="BAG65402.1"/>
    <property type="molecule type" value="mRNA"/>
</dbReference>
<dbReference type="EMBL" id="AK312538">
    <property type="protein sequence ID" value="BAG35437.1"/>
    <property type="molecule type" value="mRNA"/>
</dbReference>
<dbReference type="EMBL" id="AC004812">
    <property type="protein sequence ID" value="AAC83182.1"/>
    <property type="molecule type" value="Genomic_DNA"/>
</dbReference>
<dbReference type="EMBL" id="CH471054">
    <property type="protein sequence ID" value="EAW98163.1"/>
    <property type="molecule type" value="Genomic_DNA"/>
</dbReference>
<dbReference type="EMBL" id="CH471054">
    <property type="protein sequence ID" value="EAW98164.1"/>
    <property type="molecule type" value="Genomic_DNA"/>
</dbReference>
<dbReference type="EMBL" id="BC015931">
    <property type="protein sequence ID" value="AAH15931.1"/>
    <property type="molecule type" value="mRNA"/>
</dbReference>
<dbReference type="CCDS" id="CCDS41846.1">
    <molecule id="Q15286-1"/>
</dbReference>
<dbReference type="CCDS" id="CCDS53836.1">
    <molecule id="Q15286-2"/>
</dbReference>
<dbReference type="PIR" id="JC2488">
    <property type="entry name" value="JC2488"/>
</dbReference>
<dbReference type="RefSeq" id="NP_001161078.1">
    <molecule id="Q15286-2"/>
    <property type="nucleotide sequence ID" value="NM_001167606.2"/>
</dbReference>
<dbReference type="RefSeq" id="NP_006852.1">
    <molecule id="Q15286-1"/>
    <property type="nucleotide sequence ID" value="NM_006861.7"/>
</dbReference>
<dbReference type="PDB" id="3TW8">
    <property type="method" value="X-ray"/>
    <property type="resolution" value="2.10 A"/>
    <property type="chains" value="B/D=1-180"/>
</dbReference>
<dbReference type="PDB" id="6EKK">
    <property type="method" value="X-ray"/>
    <property type="resolution" value="1.82 A"/>
    <property type="chains" value="C/D=3-178"/>
</dbReference>
<dbReference type="PDB" id="6IF2">
    <property type="method" value="X-ray"/>
    <property type="resolution" value="2.40 A"/>
    <property type="chains" value="B=1-180"/>
</dbReference>
<dbReference type="PDB" id="6IF3">
    <property type="method" value="X-ray"/>
    <property type="resolution" value="1.50 A"/>
    <property type="chains" value="B=1-180"/>
</dbReference>
<dbReference type="PDBsum" id="3TW8"/>
<dbReference type="PDBsum" id="6EKK"/>
<dbReference type="PDBsum" id="6IF2"/>
<dbReference type="PDBsum" id="6IF3"/>
<dbReference type="SMR" id="Q15286"/>
<dbReference type="BioGRID" id="116211">
    <property type="interactions" value="589"/>
</dbReference>
<dbReference type="FunCoup" id="Q15286">
    <property type="interactions" value="2548"/>
</dbReference>
<dbReference type="IntAct" id="Q15286">
    <property type="interactions" value="71"/>
</dbReference>
<dbReference type="MINT" id="Q15286"/>
<dbReference type="STRING" id="9606.ENSP00000229340"/>
<dbReference type="GlyGen" id="Q15286">
    <property type="glycosylation" value="1 site, 1 O-linked glycan (1 site)"/>
</dbReference>
<dbReference type="iPTMnet" id="Q15286"/>
<dbReference type="MetOSite" id="Q15286"/>
<dbReference type="PhosphoSitePlus" id="Q15286"/>
<dbReference type="SwissPalm" id="Q15286"/>
<dbReference type="BioMuta" id="RAB35"/>
<dbReference type="DMDM" id="3024525"/>
<dbReference type="jPOST" id="Q15286"/>
<dbReference type="MassIVE" id="Q15286"/>
<dbReference type="PaxDb" id="9606-ENSP00000229340"/>
<dbReference type="PeptideAtlas" id="Q15286"/>
<dbReference type="ProteomicsDB" id="60512">
    <molecule id="Q15286-1"/>
</dbReference>
<dbReference type="ProteomicsDB" id="60513">
    <molecule id="Q15286-2"/>
</dbReference>
<dbReference type="Pumba" id="Q15286"/>
<dbReference type="TopDownProteomics" id="Q15286-1">
    <molecule id="Q15286-1"/>
</dbReference>
<dbReference type="TopDownProteomics" id="Q15286-2">
    <molecule id="Q15286-2"/>
</dbReference>
<dbReference type="Antibodypedia" id="45490">
    <property type="antibodies" value="298 antibodies from 32 providers"/>
</dbReference>
<dbReference type="DNASU" id="11021"/>
<dbReference type="Ensembl" id="ENST00000229340.10">
    <molecule id="Q15286-1"/>
    <property type="protein sequence ID" value="ENSP00000229340.5"/>
    <property type="gene ID" value="ENSG00000111737.12"/>
</dbReference>
<dbReference type="Ensembl" id="ENST00000534951.5">
    <molecule id="Q15286-2"/>
    <property type="protein sequence ID" value="ENSP00000441883.1"/>
    <property type="gene ID" value="ENSG00000111737.12"/>
</dbReference>
<dbReference type="GeneID" id="11021"/>
<dbReference type="KEGG" id="hsa:11021"/>
<dbReference type="MANE-Select" id="ENST00000229340.10">
    <property type="protein sequence ID" value="ENSP00000229340.5"/>
    <property type="RefSeq nucleotide sequence ID" value="NM_006861.7"/>
    <property type="RefSeq protein sequence ID" value="NP_006852.1"/>
</dbReference>
<dbReference type="UCSC" id="uc001txm.2">
    <molecule id="Q15286-1"/>
    <property type="organism name" value="human"/>
</dbReference>
<dbReference type="AGR" id="HGNC:9774"/>
<dbReference type="CTD" id="11021"/>
<dbReference type="DisGeNET" id="11021"/>
<dbReference type="GeneCards" id="RAB35"/>
<dbReference type="HGNC" id="HGNC:9774">
    <property type="gene designation" value="RAB35"/>
</dbReference>
<dbReference type="HPA" id="ENSG00000111737">
    <property type="expression patterns" value="Low tissue specificity"/>
</dbReference>
<dbReference type="MIM" id="604199">
    <property type="type" value="gene"/>
</dbReference>
<dbReference type="neXtProt" id="NX_Q15286"/>
<dbReference type="OpenTargets" id="ENSG00000111737"/>
<dbReference type="PharmGKB" id="PA34127"/>
<dbReference type="VEuPathDB" id="HostDB:ENSG00000111737"/>
<dbReference type="eggNOG" id="KOG0079">
    <property type="taxonomic scope" value="Eukaryota"/>
</dbReference>
<dbReference type="GeneTree" id="ENSGT00940000158557"/>
<dbReference type="HOGENOM" id="CLU_041217_10_1_1"/>
<dbReference type="InParanoid" id="Q15286"/>
<dbReference type="OMA" id="HEIDTNC"/>
<dbReference type="OrthoDB" id="9989112at2759"/>
<dbReference type="PAN-GO" id="Q15286">
    <property type="GO annotations" value="3 GO annotations based on evolutionary models"/>
</dbReference>
<dbReference type="PhylomeDB" id="Q15286"/>
<dbReference type="TreeFam" id="TF105954"/>
<dbReference type="PathwayCommons" id="Q15286"/>
<dbReference type="Reactome" id="R-HSA-8854214">
    <property type="pathway name" value="TBC/RABGAPs"/>
</dbReference>
<dbReference type="Reactome" id="R-HSA-8873719">
    <property type="pathway name" value="RAB geranylgeranylation"/>
</dbReference>
<dbReference type="Reactome" id="R-HSA-8876198">
    <property type="pathway name" value="RAB GEFs exchange GTP for GDP on RABs"/>
</dbReference>
<dbReference type="SABIO-RK" id="Q15286"/>
<dbReference type="SignaLink" id="Q15286"/>
<dbReference type="BioGRID-ORCS" id="11021">
    <property type="hits" value="67 hits in 1168 CRISPR screens"/>
</dbReference>
<dbReference type="ChiTaRS" id="RAB35">
    <property type="organism name" value="human"/>
</dbReference>
<dbReference type="EvolutionaryTrace" id="Q15286"/>
<dbReference type="GeneWiki" id="RAB35"/>
<dbReference type="GenomeRNAi" id="11021"/>
<dbReference type="Pharos" id="Q15286">
    <property type="development level" value="Tbio"/>
</dbReference>
<dbReference type="PRO" id="PR:Q15286"/>
<dbReference type="Proteomes" id="UP000005640">
    <property type="component" value="Chromosome 12"/>
</dbReference>
<dbReference type="RNAct" id="Q15286">
    <property type="molecule type" value="protein"/>
</dbReference>
<dbReference type="Bgee" id="ENSG00000111737">
    <property type="expression patterns" value="Expressed in cortical plate and 184 other cell types or tissues"/>
</dbReference>
<dbReference type="ExpressionAtlas" id="Q15286">
    <property type="expression patterns" value="baseline and differential"/>
</dbReference>
<dbReference type="GO" id="GO:0031253">
    <property type="term" value="C:cell projection membrane"/>
    <property type="evidence" value="ECO:0000314"/>
    <property type="project" value="UniProtKB"/>
</dbReference>
<dbReference type="GO" id="GO:0045334">
    <property type="term" value="C:clathrin-coated endocytic vesicle"/>
    <property type="evidence" value="ECO:0000314"/>
    <property type="project" value="UniProtKB"/>
</dbReference>
<dbReference type="GO" id="GO:0030669">
    <property type="term" value="C:clathrin-coated endocytic vesicle membrane"/>
    <property type="evidence" value="ECO:0000304"/>
    <property type="project" value="Reactome"/>
</dbReference>
<dbReference type="GO" id="GO:0005905">
    <property type="term" value="C:clathrin-coated pit"/>
    <property type="evidence" value="ECO:0000314"/>
    <property type="project" value="UniProtKB"/>
</dbReference>
<dbReference type="GO" id="GO:0005829">
    <property type="term" value="C:cytosol"/>
    <property type="evidence" value="ECO:0000304"/>
    <property type="project" value="Reactome"/>
</dbReference>
<dbReference type="GO" id="GO:0010008">
    <property type="term" value="C:endosome membrane"/>
    <property type="evidence" value="ECO:0000250"/>
    <property type="project" value="UniProtKB"/>
</dbReference>
<dbReference type="GO" id="GO:0070062">
    <property type="term" value="C:extracellular exosome"/>
    <property type="evidence" value="ECO:0007005"/>
    <property type="project" value="UniProtKB"/>
</dbReference>
<dbReference type="GO" id="GO:0045171">
    <property type="term" value="C:intercellular bridge"/>
    <property type="evidence" value="ECO:0000314"/>
    <property type="project" value="UniProtKB"/>
</dbReference>
<dbReference type="GO" id="GO:0042470">
    <property type="term" value="C:melanosome"/>
    <property type="evidence" value="ECO:0007669"/>
    <property type="project" value="UniProtKB-SubCell"/>
</dbReference>
<dbReference type="GO" id="GO:0005886">
    <property type="term" value="C:plasma membrane"/>
    <property type="evidence" value="ECO:0000314"/>
    <property type="project" value="UniProtKB"/>
</dbReference>
<dbReference type="GO" id="GO:0055038">
    <property type="term" value="C:recycling endosome membrane"/>
    <property type="evidence" value="ECO:0000304"/>
    <property type="project" value="Reactome"/>
</dbReference>
<dbReference type="GO" id="GO:0003925">
    <property type="term" value="F:G protein activity"/>
    <property type="evidence" value="ECO:0000314"/>
    <property type="project" value="UniProtKB"/>
</dbReference>
<dbReference type="GO" id="GO:0019003">
    <property type="term" value="F:GDP binding"/>
    <property type="evidence" value="ECO:0000314"/>
    <property type="project" value="UniProtKB"/>
</dbReference>
<dbReference type="GO" id="GO:0005525">
    <property type="term" value="F:GTP binding"/>
    <property type="evidence" value="ECO:0000314"/>
    <property type="project" value="UniProtKB"/>
</dbReference>
<dbReference type="GO" id="GO:0003924">
    <property type="term" value="F:GTPase activity"/>
    <property type="evidence" value="ECO:0000314"/>
    <property type="project" value="UniProtKB"/>
</dbReference>
<dbReference type="GO" id="GO:0005546">
    <property type="term" value="F:phosphatidylinositol-4,5-bisphosphate binding"/>
    <property type="evidence" value="ECO:0000314"/>
    <property type="project" value="UniProtKB"/>
</dbReference>
<dbReference type="GO" id="GO:0019882">
    <property type="term" value="P:antigen processing and presentation"/>
    <property type="evidence" value="ECO:0000315"/>
    <property type="project" value="UniProtKB"/>
</dbReference>
<dbReference type="GO" id="GO:1990090">
    <property type="term" value="P:cellular response to nerve growth factor stimulus"/>
    <property type="evidence" value="ECO:0000250"/>
    <property type="project" value="UniProtKB"/>
</dbReference>
<dbReference type="GO" id="GO:0032456">
    <property type="term" value="P:endocytic recycling"/>
    <property type="evidence" value="ECO:0000318"/>
    <property type="project" value="GO_Central"/>
</dbReference>
<dbReference type="GO" id="GO:0016197">
    <property type="term" value="P:endosomal transport"/>
    <property type="evidence" value="ECO:0000315"/>
    <property type="project" value="UniProtKB"/>
</dbReference>
<dbReference type="GO" id="GO:0000281">
    <property type="term" value="P:mitotic cytokinesis"/>
    <property type="evidence" value="ECO:0000315"/>
    <property type="project" value="UniProtKB"/>
</dbReference>
<dbReference type="GO" id="GO:0031175">
    <property type="term" value="P:neuron projection development"/>
    <property type="evidence" value="ECO:0000250"/>
    <property type="project" value="UniProtKB"/>
</dbReference>
<dbReference type="GO" id="GO:0048227">
    <property type="term" value="P:plasma membrane to endosome transport"/>
    <property type="evidence" value="ECO:0000315"/>
    <property type="project" value="UniProtKB"/>
</dbReference>
<dbReference type="GO" id="GO:0008104">
    <property type="term" value="P:protein localization"/>
    <property type="evidence" value="ECO:0000315"/>
    <property type="project" value="UniProtKB"/>
</dbReference>
<dbReference type="GO" id="GO:0036010">
    <property type="term" value="P:protein localization to endosome"/>
    <property type="evidence" value="ECO:0000315"/>
    <property type="project" value="UniProtKB"/>
</dbReference>
<dbReference type="GO" id="GO:0015031">
    <property type="term" value="P:protein transport"/>
    <property type="evidence" value="ECO:0007669"/>
    <property type="project" value="UniProtKB-KW"/>
</dbReference>
<dbReference type="GO" id="GO:0032482">
    <property type="term" value="P:Rab protein signal transduction"/>
    <property type="evidence" value="ECO:0007669"/>
    <property type="project" value="InterPro"/>
</dbReference>
<dbReference type="CDD" id="cd04110">
    <property type="entry name" value="Rab35"/>
    <property type="match status" value="1"/>
</dbReference>
<dbReference type="FunFam" id="3.40.50.300:FF:000404">
    <property type="entry name" value="Putative ras-related protein Rab-35"/>
    <property type="match status" value="1"/>
</dbReference>
<dbReference type="Gene3D" id="3.40.50.300">
    <property type="entry name" value="P-loop containing nucleotide triphosphate hydrolases"/>
    <property type="match status" value="1"/>
</dbReference>
<dbReference type="InterPro" id="IPR027417">
    <property type="entry name" value="P-loop_NTPase"/>
</dbReference>
<dbReference type="InterPro" id="IPR050227">
    <property type="entry name" value="Rab"/>
</dbReference>
<dbReference type="InterPro" id="IPR041815">
    <property type="entry name" value="Rab35"/>
</dbReference>
<dbReference type="InterPro" id="IPR005225">
    <property type="entry name" value="Small_GTP-bd"/>
</dbReference>
<dbReference type="InterPro" id="IPR001806">
    <property type="entry name" value="Small_GTPase"/>
</dbReference>
<dbReference type="NCBIfam" id="TIGR00231">
    <property type="entry name" value="small_GTP"/>
    <property type="match status" value="1"/>
</dbReference>
<dbReference type="PANTHER" id="PTHR47977">
    <property type="entry name" value="RAS-RELATED PROTEIN RAB"/>
    <property type="match status" value="1"/>
</dbReference>
<dbReference type="Pfam" id="PF00071">
    <property type="entry name" value="Ras"/>
    <property type="match status" value="1"/>
</dbReference>
<dbReference type="PRINTS" id="PR00449">
    <property type="entry name" value="RASTRNSFRMNG"/>
</dbReference>
<dbReference type="SMART" id="SM00177">
    <property type="entry name" value="ARF"/>
    <property type="match status" value="1"/>
</dbReference>
<dbReference type="SMART" id="SM00175">
    <property type="entry name" value="RAB"/>
    <property type="match status" value="1"/>
</dbReference>
<dbReference type="SMART" id="SM00176">
    <property type="entry name" value="RAN"/>
    <property type="match status" value="1"/>
</dbReference>
<dbReference type="SMART" id="SM00173">
    <property type="entry name" value="RAS"/>
    <property type="match status" value="1"/>
</dbReference>
<dbReference type="SMART" id="SM00174">
    <property type="entry name" value="RHO"/>
    <property type="match status" value="1"/>
</dbReference>
<dbReference type="SUPFAM" id="SSF52540">
    <property type="entry name" value="P-loop containing nucleoside triphosphate hydrolases"/>
    <property type="match status" value="1"/>
</dbReference>
<dbReference type="PROSITE" id="PS51419">
    <property type="entry name" value="RAB"/>
    <property type="match status" value="1"/>
</dbReference>
<accession>Q15286</accession>
<accession>B2R6E0</accession>
<accession>B4E390</accession>